<comment type="function">
    <text evidence="2 3">Core component of the CTLH E3 ubiquitin-protein ligase complex that selectively accepts ubiquitin from UBE2H and mediates ubiquitination and subsequent proteasomal degradation of the transcription factor HBP1. MAEA and RMND5A are both required for catalytic activity of the CTLH E3 ubiquitin-protein ligase complex. MAEA is required for normal cell proliferation. The CTLH E3 ubiquitin-protein ligase complex is not required for the degradation of enzymes involved in gluconeogenesis, such as FBP1 (By similarity). Plays a role in erythroblast enucleation during erythrocyte maturation and in the development of mature macrophages (By similarity). Mediates the attachment of erythroid cell to mature macrophages; this MAEA-mediated contact inhibits erythroid cell apoptosis (By similarity). Participates in erythroblastic island formation, which is the functional unit of definitive erythropoiesis. Associates with F-actin to regulate actin distribution in erythroblasts and macrophages (By similarity). May contribute to nuclear architecture and cells division events (By similarity).</text>
</comment>
<comment type="catalytic activity">
    <reaction evidence="3">
        <text>S-ubiquitinyl-[E2 ubiquitin-conjugating enzyme]-L-cysteine + [acceptor protein]-L-lysine = [E2 ubiquitin-conjugating enzyme]-L-cysteine + N(6)-ubiquitinyl-[acceptor protein]-L-lysine.</text>
        <dbReference type="EC" id="2.3.2.27"/>
    </reaction>
</comment>
<comment type="subunit">
    <text evidence="3">Identified in the CTLH complex that contains GID4, RANBP9 and/or RANBP10, MKLN1, MAEA, RMND5A (or alternatively its paralog RMND5B), GID8, ARMC8, WDR26 and YPEL5. Within this complex, MAEA, RMND5A (or alternatively its paralog RMND5B), GID8, WDR26, and RANBP9 and/or RANBP10 form the catalytic core, while GID4, MKLN1, ARMC8 and YPEL5 have ancillary roles. Interacts with F-actin.</text>
</comment>
<comment type="subcellular location">
    <subcellularLocation>
        <location evidence="2">Cytoplasm</location>
    </subcellularLocation>
    <subcellularLocation>
        <location evidence="3">Nucleus</location>
        <location evidence="3">Nucleoplasm</location>
    </subcellularLocation>
    <subcellularLocation>
        <location evidence="2">Nucleus matrix</location>
    </subcellularLocation>
    <subcellularLocation>
        <location evidence="2">Cell membrane</location>
    </subcellularLocation>
    <subcellularLocation>
        <location evidence="2">Cytoplasm</location>
        <location evidence="2">Cytoskeleton</location>
    </subcellularLocation>
    <text evidence="2 3">Detected in a nuclear, speckled-like pattern (By similarity). Localized with condensed chromatin at prophase; Detected in nuclear spindle poles at metaphase and in the contractile ring during telophase and cytokinesis (By similarity). Present in cytoplasm, nuclear matrix and at the cell surface in macrophages; predominantly nuclear in immature macrophages and predominantly detected at the cell surface in mature macrophages. Colocalizes with F-actin in macrophages (By similarity).</text>
</comment>
<comment type="domain">
    <text evidence="3">The expected RING-type zinc finger domain is highly divergent and most of the expected Cys residues are not conserved. Still, the protein is required for CTLH complex E3 ubiquitin-protein transferase activity. In addition, the conserved Cys-314 in this highly divergent region is required for ubiquitination by the yeast GID complex, suggesting a direct role in catalyzing ubiquitination.</text>
</comment>
<comment type="PTM">
    <text evidence="3">Autoubiquitinated as component of the CTLH E3 ubiquitin-protein ligase complex (in vitro).</text>
</comment>
<comment type="sequence caution" evidence="7">
    <conflict type="erroneous initiation">
        <sequence resource="EMBL-CDS" id="AAH85770"/>
    </conflict>
</comment>
<reference key="1">
    <citation type="journal article" date="2004" name="Genome Res.">
        <title>The status, quality, and expansion of the NIH full-length cDNA project: the Mammalian Gene Collection (MGC).</title>
        <authorList>
            <consortium name="The MGC Project Team"/>
        </authorList>
    </citation>
    <scope>NUCLEOTIDE SEQUENCE [LARGE SCALE MRNA]</scope>
    <source>
        <tissue>Heart</tissue>
    </source>
</reference>
<protein>
    <recommendedName>
        <fullName>E3 ubiquitin-protein transferase MAEA</fullName>
        <ecNumber evidence="3">2.3.2.27</ecNumber>
    </recommendedName>
    <alternativeName>
        <fullName>Macrophage erythroblast attacher</fullName>
    </alternativeName>
</protein>
<proteinExistence type="evidence at transcript level"/>
<gene>
    <name type="primary">Maea</name>
</gene>
<feature type="chain" id="PRO_0000284940" description="E3 ubiquitin-protein transferase MAEA">
    <location>
        <begin position="1"/>
        <end position="396"/>
    </location>
</feature>
<feature type="domain" description="LisH" evidence="5">
    <location>
        <begin position="121"/>
        <end position="153"/>
    </location>
</feature>
<feature type="domain" description="CTLH" evidence="4">
    <location>
        <begin position="159"/>
        <end position="216"/>
    </location>
</feature>
<feature type="zinc finger region" description="RING-Gid-type" evidence="6">
    <location>
        <begin position="314"/>
        <end position="381"/>
    </location>
</feature>
<feature type="region of interest" description="Extracellular and involved in cell to cell contact" evidence="3">
    <location>
        <begin position="1"/>
        <end position="124"/>
    </location>
</feature>
<feature type="site" description="Essential for ubiquitin ligase activity" evidence="1">
    <location>
        <position position="314"/>
    </location>
</feature>
<feature type="modified residue" description="Phosphothreonine" evidence="3">
    <location>
        <position position="28"/>
    </location>
</feature>
<sequence>MAVQESAAQLSMTLKVQEYPTLKVPYETLNKRFRAAQKNIDRETSHVTMVVAELEKTLSSCPAVDSVVSLLDGVVEKLSVLKRKAVESIQAEDESAKLCKRRIEHLKEHSSDQPAAASMWKRKRMDRMMVEHLLRCGYYNTAVKLARQSGIEDLVNIEMFLTAKEVEESLERRETATCLAWCHDNKSRLRKMKSCLEFSLRIQEFIELVRQNKRLDAVRHARKHFSQAEGSQLDEVRQVMGMLAFPPDTHISPYKDLLDPARWRMLIQQFRYDNYRLHQLGNSSVFTLTLQAGLSAIKTPQCYKEDGSSKSPDCPVCSRSLNKLAQPLPMAHCANSRLVCKISGDVMNENNPPMMLPNGYVYGYNSLLSIRQDDKVVCPRTKEVFHFSQAEKVYIM</sequence>
<organism>
    <name type="scientific">Rattus norvegicus</name>
    <name type="common">Rat</name>
    <dbReference type="NCBI Taxonomy" id="10116"/>
    <lineage>
        <taxon>Eukaryota</taxon>
        <taxon>Metazoa</taxon>
        <taxon>Chordata</taxon>
        <taxon>Craniata</taxon>
        <taxon>Vertebrata</taxon>
        <taxon>Euteleostomi</taxon>
        <taxon>Mammalia</taxon>
        <taxon>Eutheria</taxon>
        <taxon>Euarchontoglires</taxon>
        <taxon>Glires</taxon>
        <taxon>Rodentia</taxon>
        <taxon>Myomorpha</taxon>
        <taxon>Muroidea</taxon>
        <taxon>Muridae</taxon>
        <taxon>Murinae</taxon>
        <taxon>Rattus</taxon>
    </lineage>
</organism>
<keyword id="KW-0009">Actin-binding</keyword>
<keyword id="KW-0131">Cell cycle</keyword>
<keyword id="KW-0132">Cell division</keyword>
<keyword id="KW-1003">Cell membrane</keyword>
<keyword id="KW-0963">Cytoplasm</keyword>
<keyword id="KW-0206">Cytoskeleton</keyword>
<keyword id="KW-0265">Erythrocyte maturation</keyword>
<keyword id="KW-0472">Membrane</keyword>
<keyword id="KW-0479">Metal-binding</keyword>
<keyword id="KW-0539">Nucleus</keyword>
<keyword id="KW-0597">Phosphoprotein</keyword>
<keyword id="KW-1185">Reference proteome</keyword>
<keyword id="KW-0808">Transferase</keyword>
<keyword id="KW-0832">Ubl conjugation</keyword>
<keyword id="KW-0833">Ubl conjugation pathway</keyword>
<keyword id="KW-0862">Zinc</keyword>
<keyword id="KW-0863">Zinc-finger</keyword>
<evidence type="ECO:0000250" key="1">
    <source>
        <dbReference type="UniProtKB" id="P40492"/>
    </source>
</evidence>
<evidence type="ECO:0000250" key="2">
    <source>
        <dbReference type="UniProtKB" id="Q4VC33"/>
    </source>
</evidence>
<evidence type="ECO:0000250" key="3">
    <source>
        <dbReference type="UniProtKB" id="Q7L5Y9"/>
    </source>
</evidence>
<evidence type="ECO:0000255" key="4">
    <source>
        <dbReference type="PROSITE-ProRule" id="PRU00058"/>
    </source>
</evidence>
<evidence type="ECO:0000255" key="5">
    <source>
        <dbReference type="PROSITE-ProRule" id="PRU00126"/>
    </source>
</evidence>
<evidence type="ECO:0000255" key="6">
    <source>
        <dbReference type="PROSITE-ProRule" id="PRU01215"/>
    </source>
</evidence>
<evidence type="ECO:0000305" key="7"/>
<dbReference type="EC" id="2.3.2.27" evidence="3"/>
<dbReference type="EMBL" id="BC085770">
    <property type="protein sequence ID" value="AAH85770.1"/>
    <property type="status" value="ALT_INIT"/>
    <property type="molecule type" value="mRNA"/>
</dbReference>
<dbReference type="RefSeq" id="NP_001008320.2">
    <property type="nucleotide sequence ID" value="NM_001008319.2"/>
</dbReference>
<dbReference type="SMR" id="Q5RKJ1"/>
<dbReference type="FunCoup" id="Q5RKJ1">
    <property type="interactions" value="2437"/>
</dbReference>
<dbReference type="STRING" id="10116.ENSRNOP00000007181"/>
<dbReference type="PhosphoSitePlus" id="Q5RKJ1"/>
<dbReference type="jPOST" id="Q5RKJ1"/>
<dbReference type="PaxDb" id="10116-ENSRNOP00000007181"/>
<dbReference type="GeneID" id="298982"/>
<dbReference type="KEGG" id="rno:298982"/>
<dbReference type="UCSC" id="RGD:1309877">
    <property type="organism name" value="rat"/>
</dbReference>
<dbReference type="AGR" id="RGD:1309877"/>
<dbReference type="CTD" id="10296"/>
<dbReference type="RGD" id="1309877">
    <property type="gene designation" value="Maea"/>
</dbReference>
<dbReference type="VEuPathDB" id="HostDB:ENSRNOG00000005397"/>
<dbReference type="eggNOG" id="KOG0396">
    <property type="taxonomic scope" value="Eukaryota"/>
</dbReference>
<dbReference type="HOGENOM" id="CLU_027445_0_1_1"/>
<dbReference type="InParanoid" id="Q5RKJ1"/>
<dbReference type="OrthoDB" id="1933455at2759"/>
<dbReference type="PhylomeDB" id="Q5RKJ1"/>
<dbReference type="TreeFam" id="TF314273"/>
<dbReference type="Reactome" id="R-RNO-9861718">
    <property type="pathway name" value="Regulation of pyruvate metabolism"/>
</dbReference>
<dbReference type="PRO" id="PR:Q5RKJ1"/>
<dbReference type="Proteomes" id="UP000002494">
    <property type="component" value="Chromosome 14"/>
</dbReference>
<dbReference type="Bgee" id="ENSRNOG00000005397">
    <property type="expression patterns" value="Expressed in heart and 19 other cell types or tissues"/>
</dbReference>
<dbReference type="GO" id="GO:0015629">
    <property type="term" value="C:actin cytoskeleton"/>
    <property type="evidence" value="ECO:0000266"/>
    <property type="project" value="RGD"/>
</dbReference>
<dbReference type="GO" id="GO:0005826">
    <property type="term" value="C:actomyosin contractile ring"/>
    <property type="evidence" value="ECO:0000266"/>
    <property type="project" value="RGD"/>
</dbReference>
<dbReference type="GO" id="GO:0005737">
    <property type="term" value="C:cytoplasm"/>
    <property type="evidence" value="ECO:0000318"/>
    <property type="project" value="GO_Central"/>
</dbReference>
<dbReference type="GO" id="GO:0005856">
    <property type="term" value="C:cytoskeleton"/>
    <property type="evidence" value="ECO:0000266"/>
    <property type="project" value="RGD"/>
</dbReference>
<dbReference type="GO" id="GO:0034657">
    <property type="term" value="C:GID complex"/>
    <property type="evidence" value="ECO:0000318"/>
    <property type="project" value="GO_Central"/>
</dbReference>
<dbReference type="GO" id="GO:0016363">
    <property type="term" value="C:nuclear matrix"/>
    <property type="evidence" value="ECO:0000266"/>
    <property type="project" value="RGD"/>
</dbReference>
<dbReference type="GO" id="GO:0005654">
    <property type="term" value="C:nucleoplasm"/>
    <property type="evidence" value="ECO:0000250"/>
    <property type="project" value="UniProtKB"/>
</dbReference>
<dbReference type="GO" id="GO:0005634">
    <property type="term" value="C:nucleus"/>
    <property type="evidence" value="ECO:0000266"/>
    <property type="project" value="RGD"/>
</dbReference>
<dbReference type="GO" id="GO:0005886">
    <property type="term" value="C:plasma membrane"/>
    <property type="evidence" value="ECO:0000266"/>
    <property type="project" value="RGD"/>
</dbReference>
<dbReference type="GO" id="GO:0005819">
    <property type="term" value="C:spindle"/>
    <property type="evidence" value="ECO:0000266"/>
    <property type="project" value="RGD"/>
</dbReference>
<dbReference type="GO" id="GO:0000151">
    <property type="term" value="C:ubiquitin ligase complex"/>
    <property type="evidence" value="ECO:0000266"/>
    <property type="project" value="RGD"/>
</dbReference>
<dbReference type="GO" id="GO:0003779">
    <property type="term" value="F:actin binding"/>
    <property type="evidence" value="ECO:0000266"/>
    <property type="project" value="RGD"/>
</dbReference>
<dbReference type="GO" id="GO:0061630">
    <property type="term" value="F:ubiquitin protein ligase activity"/>
    <property type="evidence" value="ECO:0007669"/>
    <property type="project" value="InterPro"/>
</dbReference>
<dbReference type="GO" id="GO:0008270">
    <property type="term" value="F:zinc ion binding"/>
    <property type="evidence" value="ECO:0007669"/>
    <property type="project" value="UniProtKB-KW"/>
</dbReference>
<dbReference type="GO" id="GO:0007155">
    <property type="term" value="P:cell adhesion"/>
    <property type="evidence" value="ECO:0000266"/>
    <property type="project" value="RGD"/>
</dbReference>
<dbReference type="GO" id="GO:0051301">
    <property type="term" value="P:cell division"/>
    <property type="evidence" value="ECO:0007669"/>
    <property type="project" value="UniProtKB-KW"/>
</dbReference>
<dbReference type="GO" id="GO:0007010">
    <property type="term" value="P:cytoskeleton organization"/>
    <property type="evidence" value="ECO:0000266"/>
    <property type="project" value="RGD"/>
</dbReference>
<dbReference type="GO" id="GO:0048822">
    <property type="term" value="P:enucleate erythrocyte development"/>
    <property type="evidence" value="ECO:0000266"/>
    <property type="project" value="RGD"/>
</dbReference>
<dbReference type="GO" id="GO:0048821">
    <property type="term" value="P:erythrocyte development"/>
    <property type="evidence" value="ECO:0000266"/>
    <property type="project" value="RGD"/>
</dbReference>
<dbReference type="GO" id="GO:0043249">
    <property type="term" value="P:erythrocyte maturation"/>
    <property type="evidence" value="ECO:0007669"/>
    <property type="project" value="UniProtKB-KW"/>
</dbReference>
<dbReference type="GO" id="GO:0033033">
    <property type="term" value="P:negative regulation of myeloid cell apoptotic process"/>
    <property type="evidence" value="ECO:0000266"/>
    <property type="project" value="RGD"/>
</dbReference>
<dbReference type="GO" id="GO:0043161">
    <property type="term" value="P:proteasome-mediated ubiquitin-dependent protein catabolic process"/>
    <property type="evidence" value="ECO:0000318"/>
    <property type="project" value="GO_Central"/>
</dbReference>
<dbReference type="CDD" id="cd16659">
    <property type="entry name" value="RING-Ubox_Emp"/>
    <property type="match status" value="1"/>
</dbReference>
<dbReference type="InterPro" id="IPR013144">
    <property type="entry name" value="CRA_dom"/>
</dbReference>
<dbReference type="InterPro" id="IPR024964">
    <property type="entry name" value="CTLH/CRA"/>
</dbReference>
<dbReference type="InterPro" id="IPR006595">
    <property type="entry name" value="CTLH_C"/>
</dbReference>
<dbReference type="InterPro" id="IPR045098">
    <property type="entry name" value="Fyv10_fam"/>
</dbReference>
<dbReference type="InterPro" id="IPR006594">
    <property type="entry name" value="LisH"/>
</dbReference>
<dbReference type="InterPro" id="IPR044063">
    <property type="entry name" value="ZF_RING_GID"/>
</dbReference>
<dbReference type="PANTHER" id="PTHR12170:SF2">
    <property type="entry name" value="E3 UBIQUITIN-PROTEIN TRANSFERASE MAEA"/>
    <property type="match status" value="1"/>
</dbReference>
<dbReference type="PANTHER" id="PTHR12170">
    <property type="entry name" value="MACROPHAGE ERYTHROBLAST ATTACHER-RELATED"/>
    <property type="match status" value="1"/>
</dbReference>
<dbReference type="Pfam" id="PF10607">
    <property type="entry name" value="CTLH"/>
    <property type="match status" value="1"/>
</dbReference>
<dbReference type="SMART" id="SM00757">
    <property type="entry name" value="CRA"/>
    <property type="match status" value="1"/>
</dbReference>
<dbReference type="SMART" id="SM00668">
    <property type="entry name" value="CTLH"/>
    <property type="match status" value="1"/>
</dbReference>
<dbReference type="SMART" id="SM00667">
    <property type="entry name" value="LisH"/>
    <property type="match status" value="1"/>
</dbReference>
<dbReference type="SUPFAM" id="SSF57850">
    <property type="entry name" value="RING/U-box"/>
    <property type="match status" value="1"/>
</dbReference>
<dbReference type="PROSITE" id="PS50897">
    <property type="entry name" value="CTLH"/>
    <property type="match status" value="1"/>
</dbReference>
<dbReference type="PROSITE" id="PS50896">
    <property type="entry name" value="LISH"/>
    <property type="match status" value="1"/>
</dbReference>
<dbReference type="PROSITE" id="PS51867">
    <property type="entry name" value="ZF_RING_GID"/>
    <property type="match status" value="1"/>
</dbReference>
<name>MAEA_RAT</name>
<accession>Q5RKJ1</accession>